<dbReference type="EMBL" id="CP000026">
    <property type="protein sequence ID" value="AAV79501.1"/>
    <property type="molecule type" value="Genomic_DNA"/>
</dbReference>
<dbReference type="RefSeq" id="WP_000429386.1">
    <property type="nucleotide sequence ID" value="NC_006511.1"/>
</dbReference>
<dbReference type="SMR" id="Q5PKW7"/>
<dbReference type="GeneID" id="98390858"/>
<dbReference type="KEGG" id="spt:SPA3709"/>
<dbReference type="HOGENOM" id="CLU_148047_1_0_6"/>
<dbReference type="Proteomes" id="UP000008185">
    <property type="component" value="Chromosome"/>
</dbReference>
<dbReference type="GO" id="GO:0005886">
    <property type="term" value="C:plasma membrane"/>
    <property type="evidence" value="ECO:0007669"/>
    <property type="project" value="UniProtKB-SubCell"/>
</dbReference>
<dbReference type="GO" id="GO:0045259">
    <property type="term" value="C:proton-transporting ATP synthase complex"/>
    <property type="evidence" value="ECO:0007669"/>
    <property type="project" value="UniProtKB-KW"/>
</dbReference>
<dbReference type="GO" id="GO:0033177">
    <property type="term" value="C:proton-transporting two-sector ATPase complex, proton-transporting domain"/>
    <property type="evidence" value="ECO:0007669"/>
    <property type="project" value="InterPro"/>
</dbReference>
<dbReference type="GO" id="GO:0008289">
    <property type="term" value="F:lipid binding"/>
    <property type="evidence" value="ECO:0007669"/>
    <property type="project" value="UniProtKB-KW"/>
</dbReference>
<dbReference type="GO" id="GO:0046933">
    <property type="term" value="F:proton-transporting ATP synthase activity, rotational mechanism"/>
    <property type="evidence" value="ECO:0007669"/>
    <property type="project" value="UniProtKB-UniRule"/>
</dbReference>
<dbReference type="CDD" id="cd18185">
    <property type="entry name" value="ATP-synt_Fo_c_ATPE"/>
    <property type="match status" value="1"/>
</dbReference>
<dbReference type="FunFam" id="1.20.20.10:FF:000002">
    <property type="entry name" value="ATP synthase subunit c"/>
    <property type="match status" value="1"/>
</dbReference>
<dbReference type="Gene3D" id="1.20.20.10">
    <property type="entry name" value="F1F0 ATP synthase subunit C"/>
    <property type="match status" value="1"/>
</dbReference>
<dbReference type="HAMAP" id="MF_01396">
    <property type="entry name" value="ATP_synth_c_bact"/>
    <property type="match status" value="1"/>
</dbReference>
<dbReference type="InterPro" id="IPR005953">
    <property type="entry name" value="ATP_synth_csu_bac/chlpt"/>
</dbReference>
<dbReference type="InterPro" id="IPR000454">
    <property type="entry name" value="ATP_synth_F0_csu"/>
</dbReference>
<dbReference type="InterPro" id="IPR020537">
    <property type="entry name" value="ATP_synth_F0_csu_DDCD_BS"/>
</dbReference>
<dbReference type="InterPro" id="IPR038662">
    <property type="entry name" value="ATP_synth_F0_csu_sf"/>
</dbReference>
<dbReference type="InterPro" id="IPR002379">
    <property type="entry name" value="ATPase_proteolipid_c-like_dom"/>
</dbReference>
<dbReference type="InterPro" id="IPR035921">
    <property type="entry name" value="F/V-ATP_Csub_sf"/>
</dbReference>
<dbReference type="NCBIfam" id="TIGR01260">
    <property type="entry name" value="ATP_synt_c"/>
    <property type="match status" value="1"/>
</dbReference>
<dbReference type="NCBIfam" id="NF005363">
    <property type="entry name" value="PRK06876.1"/>
    <property type="match status" value="1"/>
</dbReference>
<dbReference type="Pfam" id="PF00137">
    <property type="entry name" value="ATP-synt_C"/>
    <property type="match status" value="1"/>
</dbReference>
<dbReference type="PRINTS" id="PR00124">
    <property type="entry name" value="ATPASEC"/>
</dbReference>
<dbReference type="SUPFAM" id="SSF81333">
    <property type="entry name" value="F1F0 ATP synthase subunit C"/>
    <property type="match status" value="1"/>
</dbReference>
<dbReference type="PROSITE" id="PS00605">
    <property type="entry name" value="ATPASE_C"/>
    <property type="match status" value="1"/>
</dbReference>
<gene>
    <name evidence="1" type="primary">atpE</name>
    <name type="ordered locus">SPA3709</name>
</gene>
<feature type="chain" id="PRO_1000184461" description="ATP synthase subunit c">
    <location>
        <begin position="1"/>
        <end position="79"/>
    </location>
</feature>
<feature type="transmembrane region" description="Helical" evidence="1">
    <location>
        <begin position="11"/>
        <end position="31"/>
    </location>
</feature>
<feature type="transmembrane region" description="Helical" evidence="1">
    <location>
        <begin position="53"/>
        <end position="73"/>
    </location>
</feature>
<feature type="site" description="Reversibly protonated during proton transport" evidence="1">
    <location>
        <position position="61"/>
    </location>
</feature>
<keyword id="KW-0066">ATP synthesis</keyword>
<keyword id="KW-0997">Cell inner membrane</keyword>
<keyword id="KW-1003">Cell membrane</keyword>
<keyword id="KW-0138">CF(0)</keyword>
<keyword id="KW-0375">Hydrogen ion transport</keyword>
<keyword id="KW-0406">Ion transport</keyword>
<keyword id="KW-0446">Lipid-binding</keyword>
<keyword id="KW-0472">Membrane</keyword>
<keyword id="KW-0812">Transmembrane</keyword>
<keyword id="KW-1133">Transmembrane helix</keyword>
<keyword id="KW-0813">Transport</keyword>
<reference key="1">
    <citation type="journal article" date="2004" name="Nat. Genet.">
        <title>Comparison of genome degradation in Paratyphi A and Typhi, human-restricted serovars of Salmonella enterica that cause typhoid.</title>
        <authorList>
            <person name="McClelland M."/>
            <person name="Sanderson K.E."/>
            <person name="Clifton S.W."/>
            <person name="Latreille P."/>
            <person name="Porwollik S."/>
            <person name="Sabo A."/>
            <person name="Meyer R."/>
            <person name="Bieri T."/>
            <person name="Ozersky P."/>
            <person name="McLellan M."/>
            <person name="Harkins C.R."/>
            <person name="Wang C."/>
            <person name="Nguyen C."/>
            <person name="Berghoff A."/>
            <person name="Elliott G."/>
            <person name="Kohlberg S."/>
            <person name="Strong C."/>
            <person name="Du F."/>
            <person name="Carter J."/>
            <person name="Kremizki C."/>
            <person name="Layman D."/>
            <person name="Leonard S."/>
            <person name="Sun H."/>
            <person name="Fulton L."/>
            <person name="Nash W."/>
            <person name="Miner T."/>
            <person name="Minx P."/>
            <person name="Delehaunty K."/>
            <person name="Fronick C."/>
            <person name="Magrini V."/>
            <person name="Nhan M."/>
            <person name="Warren W."/>
            <person name="Florea L."/>
            <person name="Spieth J."/>
            <person name="Wilson R.K."/>
        </authorList>
    </citation>
    <scope>NUCLEOTIDE SEQUENCE [LARGE SCALE GENOMIC DNA]</scope>
    <source>
        <strain>ATCC 9150 / SARB42</strain>
    </source>
</reference>
<protein>
    <recommendedName>
        <fullName evidence="1">ATP synthase subunit c</fullName>
    </recommendedName>
    <alternativeName>
        <fullName evidence="1">ATP synthase F(0) sector subunit c</fullName>
    </alternativeName>
    <alternativeName>
        <fullName evidence="1">F-type ATPase subunit c</fullName>
        <shortName evidence="1">F-ATPase subunit c</shortName>
    </alternativeName>
    <alternativeName>
        <fullName evidence="1">Lipid-binding protein</fullName>
    </alternativeName>
</protein>
<comment type="function">
    <text evidence="1">F(1)F(0) ATP synthase produces ATP from ADP in the presence of a proton or sodium gradient. F-type ATPases consist of two structural domains, F(1) containing the extramembraneous catalytic core and F(0) containing the membrane proton channel, linked together by a central stalk and a peripheral stalk. During catalysis, ATP synthesis in the catalytic domain of F(1) is coupled via a rotary mechanism of the central stalk subunits to proton translocation.</text>
</comment>
<comment type="function">
    <text evidence="1">Key component of the F(0) channel; it plays a direct role in translocation across the membrane. A homomeric c-ring of between 10-14 subunits forms the central stalk rotor element with the F(1) delta and epsilon subunits.</text>
</comment>
<comment type="subunit">
    <text evidence="1">F-type ATPases have 2 components, F(1) - the catalytic core - and F(0) - the membrane proton channel. F(1) has five subunits: alpha(3), beta(3), gamma(1), delta(1), epsilon(1). F(0) has three main subunits: a(1), b(2) and c(10-14). The alpha and beta chains form an alternating ring which encloses part of the gamma chain. F(1) is attached to F(0) by a central stalk formed by the gamma and epsilon chains, while a peripheral stalk is formed by the delta and b chains.</text>
</comment>
<comment type="subcellular location">
    <subcellularLocation>
        <location evidence="1">Cell inner membrane</location>
        <topology evidence="1">Multi-pass membrane protein</topology>
    </subcellularLocation>
</comment>
<comment type="similarity">
    <text evidence="1">Belongs to the ATPase C chain family.</text>
</comment>
<organism>
    <name type="scientific">Salmonella paratyphi A (strain ATCC 9150 / SARB42)</name>
    <dbReference type="NCBI Taxonomy" id="295319"/>
    <lineage>
        <taxon>Bacteria</taxon>
        <taxon>Pseudomonadati</taxon>
        <taxon>Pseudomonadota</taxon>
        <taxon>Gammaproteobacteria</taxon>
        <taxon>Enterobacterales</taxon>
        <taxon>Enterobacteriaceae</taxon>
        <taxon>Salmonella</taxon>
    </lineage>
</organism>
<name>ATPL_SALPA</name>
<proteinExistence type="inferred from homology"/>
<evidence type="ECO:0000255" key="1">
    <source>
        <dbReference type="HAMAP-Rule" id="MF_01396"/>
    </source>
</evidence>
<sequence>MENLNMDLLYMAAAVMMGLAAIGAAIGIGILGGKFLEGAARQPDLIPLLRTQFFIVMGLVDAIPMIAVGLGLYVMFAVA</sequence>
<accession>Q5PKW7</accession>